<protein>
    <recommendedName>
        <fullName>Probable arabinan endo-1,5-alpha-L-arabinosidase A</fullName>
        <ecNumber>3.2.1.99</ecNumber>
    </recommendedName>
    <alternativeName>
        <fullName>Endo-1,5-alpha-L-arabinanase A</fullName>
        <shortName>ABN A</shortName>
    </alternativeName>
</protein>
<name>ABNA_ASPTN</name>
<dbReference type="EC" id="3.2.1.99"/>
<dbReference type="EMBL" id="CH476597">
    <property type="protein sequence ID" value="EAU36794.1"/>
    <property type="molecule type" value="Genomic_DNA"/>
</dbReference>
<dbReference type="RefSeq" id="XP_001212698.1">
    <property type="nucleotide sequence ID" value="XM_001212698.1"/>
</dbReference>
<dbReference type="SMR" id="Q0CS14"/>
<dbReference type="STRING" id="341663.Q0CS14"/>
<dbReference type="EnsemblFungi" id="EAU36794">
    <property type="protein sequence ID" value="EAU36794"/>
    <property type="gene ID" value="ATEG_03520"/>
</dbReference>
<dbReference type="GeneID" id="4317970"/>
<dbReference type="VEuPathDB" id="FungiDB:ATEG_03520"/>
<dbReference type="eggNOG" id="ENOG502QTQG">
    <property type="taxonomic scope" value="Eukaryota"/>
</dbReference>
<dbReference type="HOGENOM" id="CLU_009397_5_0_1"/>
<dbReference type="OMA" id="GHLWAPD"/>
<dbReference type="OrthoDB" id="195678at2759"/>
<dbReference type="UniPathway" id="UPA00667"/>
<dbReference type="Proteomes" id="UP000007963">
    <property type="component" value="Unassembled WGS sequence"/>
</dbReference>
<dbReference type="GO" id="GO:0005576">
    <property type="term" value="C:extracellular region"/>
    <property type="evidence" value="ECO:0007669"/>
    <property type="project" value="UniProtKB-SubCell"/>
</dbReference>
<dbReference type="GO" id="GO:0046558">
    <property type="term" value="F:arabinan endo-1,5-alpha-L-arabinosidase activity"/>
    <property type="evidence" value="ECO:0007669"/>
    <property type="project" value="UniProtKB-EC"/>
</dbReference>
<dbReference type="GO" id="GO:0031222">
    <property type="term" value="P:arabinan catabolic process"/>
    <property type="evidence" value="ECO:0007669"/>
    <property type="project" value="UniProtKB-UniPathway"/>
</dbReference>
<dbReference type="GO" id="GO:0045493">
    <property type="term" value="P:xylan catabolic process"/>
    <property type="evidence" value="ECO:0007669"/>
    <property type="project" value="UniProtKB-KW"/>
</dbReference>
<dbReference type="CDD" id="cd18831">
    <property type="entry name" value="GH43_AnAbnA-like"/>
    <property type="match status" value="1"/>
</dbReference>
<dbReference type="FunFam" id="2.115.10.20:FF:000005">
    <property type="entry name" value="Arabinan endo-1,5-alpha-L-arabinosidase"/>
    <property type="match status" value="1"/>
</dbReference>
<dbReference type="Gene3D" id="2.115.10.20">
    <property type="entry name" value="Glycosyl hydrolase domain, family 43"/>
    <property type="match status" value="1"/>
</dbReference>
<dbReference type="InterPro" id="IPR050727">
    <property type="entry name" value="GH43_arabinanases"/>
</dbReference>
<dbReference type="InterPro" id="IPR006710">
    <property type="entry name" value="Glyco_hydro_43"/>
</dbReference>
<dbReference type="InterPro" id="IPR016840">
    <property type="entry name" value="Glyco_hydro_43_endo_a_Ara-ase"/>
</dbReference>
<dbReference type="InterPro" id="IPR023296">
    <property type="entry name" value="Glyco_hydro_beta-prop_sf"/>
</dbReference>
<dbReference type="PANTHER" id="PTHR43301">
    <property type="entry name" value="ARABINAN ENDO-1,5-ALPHA-L-ARABINOSIDASE"/>
    <property type="match status" value="1"/>
</dbReference>
<dbReference type="PANTHER" id="PTHR43301:SF3">
    <property type="entry name" value="ARABINAN ENDO-1,5-ALPHA-L-ARABINOSIDASE A-RELATED"/>
    <property type="match status" value="1"/>
</dbReference>
<dbReference type="Pfam" id="PF04616">
    <property type="entry name" value="Glyco_hydro_43"/>
    <property type="match status" value="1"/>
</dbReference>
<dbReference type="PIRSF" id="PIRSF026534">
    <property type="entry name" value="Endo_alpha-L-arabinosidase"/>
    <property type="match status" value="1"/>
</dbReference>
<dbReference type="SUPFAM" id="SSF75005">
    <property type="entry name" value="Arabinanase/levansucrase/invertase"/>
    <property type="match status" value="1"/>
</dbReference>
<reference key="1">
    <citation type="submission" date="2005-09" db="EMBL/GenBank/DDBJ databases">
        <title>Annotation of the Aspergillus terreus NIH2624 genome.</title>
        <authorList>
            <person name="Birren B.W."/>
            <person name="Lander E.S."/>
            <person name="Galagan J.E."/>
            <person name="Nusbaum C."/>
            <person name="Devon K."/>
            <person name="Henn M."/>
            <person name="Ma L.-J."/>
            <person name="Jaffe D.B."/>
            <person name="Butler J."/>
            <person name="Alvarez P."/>
            <person name="Gnerre S."/>
            <person name="Grabherr M."/>
            <person name="Kleber M."/>
            <person name="Mauceli E.W."/>
            <person name="Brockman W."/>
            <person name="Rounsley S."/>
            <person name="Young S.K."/>
            <person name="LaButti K."/>
            <person name="Pushparaj V."/>
            <person name="DeCaprio D."/>
            <person name="Crawford M."/>
            <person name="Koehrsen M."/>
            <person name="Engels R."/>
            <person name="Montgomery P."/>
            <person name="Pearson M."/>
            <person name="Howarth C."/>
            <person name="Larson L."/>
            <person name="Luoma S."/>
            <person name="White J."/>
            <person name="Alvarado L."/>
            <person name="Kodira C.D."/>
            <person name="Zeng Q."/>
            <person name="Oleary S."/>
            <person name="Yandava C."/>
            <person name="Denning D.W."/>
            <person name="Nierman W.C."/>
            <person name="Milne T."/>
            <person name="Madden K."/>
        </authorList>
    </citation>
    <scope>NUCLEOTIDE SEQUENCE [LARGE SCALE GENOMIC DNA]</scope>
    <source>
        <strain>NIH 2624 / FGSC A1156</strain>
    </source>
</reference>
<sequence length="338" mass="36012">MRASFVVTAPLLAAAVHGYAAPGACSGACNIHDPSLIRRESDGKYFRFSTGNKISYASASSIEGPWTTIGSMLPDGSSIDLPGNDDLWVSAHATWTGVPHANREYQAPDAQIVNGVYHVYYSVSSFGSQNSAIGLATSTSMDAGTWTDHGSTGIQSSSSKNYNAIDGNLFNDGGTYYMNFGSFWADIFQAPMNSAATKVASSSYGIAYDPSGTHAVEGSYLYKYGNYYYLFYSWGICCGYDTSRPAAGQEYKIKVCRSTSATGNFVDADGVACTNGGGTVVLESHDNVYGPGGQGVFTDPNLGPVLYYHYVDTNIGYADGQKLFGWNVLDFSSGWPVV</sequence>
<proteinExistence type="inferred from homology"/>
<keyword id="KW-0119">Carbohydrate metabolism</keyword>
<keyword id="KW-0326">Glycosidase</keyword>
<keyword id="KW-0378">Hydrolase</keyword>
<keyword id="KW-0624">Polysaccharide degradation</keyword>
<keyword id="KW-1185">Reference proteome</keyword>
<keyword id="KW-0964">Secreted</keyword>
<keyword id="KW-0732">Signal</keyword>
<keyword id="KW-0858">Xylan degradation</keyword>
<accession>Q0CS14</accession>
<gene>
    <name type="primary">abnA</name>
    <name type="ORF">ATEG_03520</name>
</gene>
<feature type="signal peptide" evidence="3">
    <location>
        <begin position="1"/>
        <end position="20"/>
    </location>
</feature>
<feature type="chain" id="PRO_0000394622" description="Probable arabinan endo-1,5-alpha-L-arabinosidase A">
    <location>
        <begin position="21"/>
        <end position="338"/>
    </location>
</feature>
<feature type="active site" description="Proton acceptor" evidence="2">
    <location>
        <position position="33"/>
    </location>
</feature>
<feature type="active site" description="Proton donor" evidence="2">
    <location>
        <position position="217"/>
    </location>
</feature>
<feature type="site" description="Important for catalytic activity, responsible for pKa modulation of the active site Glu and correct orientation of both the proton donor and substrate" evidence="2">
    <location>
        <position position="166"/>
    </location>
</feature>
<evidence type="ECO:0000250" key="1"/>
<evidence type="ECO:0000250" key="2">
    <source>
        <dbReference type="UniProtKB" id="P94522"/>
    </source>
</evidence>
<evidence type="ECO:0000255" key="3"/>
<evidence type="ECO:0000305" key="4"/>
<organism>
    <name type="scientific">Aspergillus terreus (strain NIH 2624 / FGSC A1156)</name>
    <dbReference type="NCBI Taxonomy" id="341663"/>
    <lineage>
        <taxon>Eukaryota</taxon>
        <taxon>Fungi</taxon>
        <taxon>Dikarya</taxon>
        <taxon>Ascomycota</taxon>
        <taxon>Pezizomycotina</taxon>
        <taxon>Eurotiomycetes</taxon>
        <taxon>Eurotiomycetidae</taxon>
        <taxon>Eurotiales</taxon>
        <taxon>Aspergillaceae</taxon>
        <taxon>Aspergillus</taxon>
        <taxon>Aspergillus subgen. Circumdati</taxon>
    </lineage>
</organism>
<comment type="function">
    <text evidence="1">Endo-1,5-alpha-L-arabinanase involved in degradation of pectin. Its preferred substrate is linear 1,5-alpha-L-arabinan (By similarity).</text>
</comment>
<comment type="catalytic activity">
    <reaction>
        <text>Endohydrolysis of (1-&gt;5)-alpha-arabinofuranosidic linkages in (1-&gt;5)-arabinans.</text>
        <dbReference type="EC" id="3.2.1.99"/>
    </reaction>
</comment>
<comment type="pathway">
    <text>Glycan metabolism; L-arabinan degradation.</text>
</comment>
<comment type="subcellular location">
    <subcellularLocation>
        <location evidence="1">Secreted</location>
    </subcellularLocation>
</comment>
<comment type="similarity">
    <text evidence="4">Belongs to the glycosyl hydrolase 43 family.</text>
</comment>